<name>AROE_STAAT</name>
<organism>
    <name type="scientific">Staphylococcus aureus (strain USA300 / TCH1516)</name>
    <dbReference type="NCBI Taxonomy" id="451516"/>
    <lineage>
        <taxon>Bacteria</taxon>
        <taxon>Bacillati</taxon>
        <taxon>Bacillota</taxon>
        <taxon>Bacilli</taxon>
        <taxon>Bacillales</taxon>
        <taxon>Staphylococcaceae</taxon>
        <taxon>Staphylococcus</taxon>
    </lineage>
</organism>
<accession>A8Z4D5</accession>
<comment type="function">
    <text evidence="1">Involved in the biosynthesis of the chorismate, which leads to the biosynthesis of aromatic amino acids. Catalyzes the reversible NADPH linked reduction of 3-dehydroshikimate (DHSA) to yield shikimate (SA).</text>
</comment>
<comment type="catalytic activity">
    <reaction evidence="1">
        <text>shikimate + NADP(+) = 3-dehydroshikimate + NADPH + H(+)</text>
        <dbReference type="Rhea" id="RHEA:17737"/>
        <dbReference type="ChEBI" id="CHEBI:15378"/>
        <dbReference type="ChEBI" id="CHEBI:16630"/>
        <dbReference type="ChEBI" id="CHEBI:36208"/>
        <dbReference type="ChEBI" id="CHEBI:57783"/>
        <dbReference type="ChEBI" id="CHEBI:58349"/>
        <dbReference type="EC" id="1.1.1.25"/>
    </reaction>
</comment>
<comment type="pathway">
    <text evidence="1">Metabolic intermediate biosynthesis; chorismate biosynthesis; chorismate from D-erythrose 4-phosphate and phosphoenolpyruvate: step 4/7.</text>
</comment>
<comment type="subunit">
    <text evidence="1">Homodimer.</text>
</comment>
<comment type="similarity">
    <text evidence="1">Belongs to the shikimate dehydrogenase family.</text>
</comment>
<feature type="chain" id="PRO_1000078131" description="Shikimate dehydrogenase (NADP(+))">
    <location>
        <begin position="1"/>
        <end position="268"/>
    </location>
</feature>
<feature type="active site" description="Proton acceptor" evidence="1">
    <location>
        <position position="64"/>
    </location>
</feature>
<feature type="binding site" evidence="1">
    <location>
        <begin position="13"/>
        <end position="15"/>
    </location>
    <ligand>
        <name>shikimate</name>
        <dbReference type="ChEBI" id="CHEBI:36208"/>
    </ligand>
</feature>
<feature type="binding site" evidence="1">
    <location>
        <position position="60"/>
    </location>
    <ligand>
        <name>shikimate</name>
        <dbReference type="ChEBI" id="CHEBI:36208"/>
    </ligand>
</feature>
<feature type="binding site" evidence="1">
    <location>
        <position position="76"/>
    </location>
    <ligand>
        <name>NADP(+)</name>
        <dbReference type="ChEBI" id="CHEBI:58349"/>
    </ligand>
</feature>
<feature type="binding site" evidence="1">
    <location>
        <position position="85"/>
    </location>
    <ligand>
        <name>shikimate</name>
        <dbReference type="ChEBI" id="CHEBI:36208"/>
    </ligand>
</feature>
<feature type="binding site" evidence="1">
    <location>
        <position position="100"/>
    </location>
    <ligand>
        <name>shikimate</name>
        <dbReference type="ChEBI" id="CHEBI:36208"/>
    </ligand>
</feature>
<feature type="binding site" evidence="1">
    <location>
        <begin position="124"/>
        <end position="128"/>
    </location>
    <ligand>
        <name>NADP(+)</name>
        <dbReference type="ChEBI" id="CHEBI:58349"/>
    </ligand>
</feature>
<feature type="binding site" evidence="1">
    <location>
        <begin position="148"/>
        <end position="153"/>
    </location>
    <ligand>
        <name>NADP(+)</name>
        <dbReference type="ChEBI" id="CHEBI:58349"/>
    </ligand>
</feature>
<feature type="binding site" evidence="1">
    <location>
        <position position="209"/>
    </location>
    <ligand>
        <name>NADP(+)</name>
        <dbReference type="ChEBI" id="CHEBI:58349"/>
    </ligand>
</feature>
<feature type="binding site" evidence="1">
    <location>
        <position position="211"/>
    </location>
    <ligand>
        <name>shikimate</name>
        <dbReference type="ChEBI" id="CHEBI:36208"/>
    </ligand>
</feature>
<feature type="binding site" evidence="1">
    <location>
        <position position="232"/>
    </location>
    <ligand>
        <name>NADP(+)</name>
        <dbReference type="ChEBI" id="CHEBI:58349"/>
    </ligand>
</feature>
<dbReference type="EC" id="1.1.1.25" evidence="1"/>
<dbReference type="EMBL" id="CP000730">
    <property type="protein sequence ID" value="ABX29604.1"/>
    <property type="molecule type" value="Genomic_DNA"/>
</dbReference>
<dbReference type="RefSeq" id="WP_000666761.1">
    <property type="nucleotide sequence ID" value="NC_010079.1"/>
</dbReference>
<dbReference type="SMR" id="A8Z4D5"/>
<dbReference type="KEGG" id="sax:USA300HOU_1597"/>
<dbReference type="HOGENOM" id="CLU_044063_4_1_9"/>
<dbReference type="UniPathway" id="UPA00053">
    <property type="reaction ID" value="UER00087"/>
</dbReference>
<dbReference type="GO" id="GO:0005829">
    <property type="term" value="C:cytosol"/>
    <property type="evidence" value="ECO:0007669"/>
    <property type="project" value="TreeGrafter"/>
</dbReference>
<dbReference type="GO" id="GO:0050661">
    <property type="term" value="F:NADP binding"/>
    <property type="evidence" value="ECO:0007669"/>
    <property type="project" value="InterPro"/>
</dbReference>
<dbReference type="GO" id="GO:0004764">
    <property type="term" value="F:shikimate 3-dehydrogenase (NADP+) activity"/>
    <property type="evidence" value="ECO:0007669"/>
    <property type="project" value="UniProtKB-UniRule"/>
</dbReference>
<dbReference type="GO" id="GO:0008652">
    <property type="term" value="P:amino acid biosynthetic process"/>
    <property type="evidence" value="ECO:0007669"/>
    <property type="project" value="UniProtKB-KW"/>
</dbReference>
<dbReference type="GO" id="GO:0009073">
    <property type="term" value="P:aromatic amino acid family biosynthetic process"/>
    <property type="evidence" value="ECO:0007669"/>
    <property type="project" value="UniProtKB-KW"/>
</dbReference>
<dbReference type="GO" id="GO:0009423">
    <property type="term" value="P:chorismate biosynthetic process"/>
    <property type="evidence" value="ECO:0007669"/>
    <property type="project" value="UniProtKB-UniRule"/>
</dbReference>
<dbReference type="GO" id="GO:0019632">
    <property type="term" value="P:shikimate metabolic process"/>
    <property type="evidence" value="ECO:0007669"/>
    <property type="project" value="InterPro"/>
</dbReference>
<dbReference type="CDD" id="cd01065">
    <property type="entry name" value="NAD_bind_Shikimate_DH"/>
    <property type="match status" value="1"/>
</dbReference>
<dbReference type="FunFam" id="3.40.50.10860:FF:000016">
    <property type="entry name" value="Shikimate dehydrogenase (NADP(+))"/>
    <property type="match status" value="1"/>
</dbReference>
<dbReference type="FunFam" id="3.40.50.720:FF:000445">
    <property type="entry name" value="Shikimate dehydrogenase (NADP(+))"/>
    <property type="match status" value="1"/>
</dbReference>
<dbReference type="Gene3D" id="3.40.50.10860">
    <property type="entry name" value="Leucine Dehydrogenase, chain A, domain 1"/>
    <property type="match status" value="1"/>
</dbReference>
<dbReference type="Gene3D" id="3.40.50.720">
    <property type="entry name" value="NAD(P)-binding Rossmann-like Domain"/>
    <property type="match status" value="1"/>
</dbReference>
<dbReference type="HAMAP" id="MF_00222">
    <property type="entry name" value="Shikimate_DH_AroE"/>
    <property type="match status" value="1"/>
</dbReference>
<dbReference type="InterPro" id="IPR046346">
    <property type="entry name" value="Aminoacid_DH-like_N_sf"/>
</dbReference>
<dbReference type="InterPro" id="IPR036291">
    <property type="entry name" value="NAD(P)-bd_dom_sf"/>
</dbReference>
<dbReference type="InterPro" id="IPR041121">
    <property type="entry name" value="SDH_C"/>
</dbReference>
<dbReference type="InterPro" id="IPR011342">
    <property type="entry name" value="Shikimate_DH"/>
</dbReference>
<dbReference type="InterPro" id="IPR013708">
    <property type="entry name" value="Shikimate_DH-bd_N"/>
</dbReference>
<dbReference type="InterPro" id="IPR022893">
    <property type="entry name" value="Shikimate_DH_fam"/>
</dbReference>
<dbReference type="InterPro" id="IPR006151">
    <property type="entry name" value="Shikm_DH/Glu-tRNA_Rdtase"/>
</dbReference>
<dbReference type="NCBIfam" id="TIGR00507">
    <property type="entry name" value="aroE"/>
    <property type="match status" value="1"/>
</dbReference>
<dbReference type="PANTHER" id="PTHR21089:SF1">
    <property type="entry name" value="BIFUNCTIONAL 3-DEHYDROQUINATE DEHYDRATASE_SHIKIMATE DEHYDROGENASE, CHLOROPLASTIC"/>
    <property type="match status" value="1"/>
</dbReference>
<dbReference type="PANTHER" id="PTHR21089">
    <property type="entry name" value="SHIKIMATE DEHYDROGENASE"/>
    <property type="match status" value="1"/>
</dbReference>
<dbReference type="Pfam" id="PF18317">
    <property type="entry name" value="SDH_C"/>
    <property type="match status" value="1"/>
</dbReference>
<dbReference type="Pfam" id="PF01488">
    <property type="entry name" value="Shikimate_DH"/>
    <property type="match status" value="1"/>
</dbReference>
<dbReference type="Pfam" id="PF08501">
    <property type="entry name" value="Shikimate_dh_N"/>
    <property type="match status" value="1"/>
</dbReference>
<dbReference type="SUPFAM" id="SSF53223">
    <property type="entry name" value="Aminoacid dehydrogenase-like, N-terminal domain"/>
    <property type="match status" value="1"/>
</dbReference>
<dbReference type="SUPFAM" id="SSF51735">
    <property type="entry name" value="NAD(P)-binding Rossmann-fold domains"/>
    <property type="match status" value="1"/>
</dbReference>
<protein>
    <recommendedName>
        <fullName evidence="1">Shikimate dehydrogenase (NADP(+))</fullName>
        <shortName evidence="1">SDH</shortName>
        <ecNumber evidence="1">1.1.1.25</ecNumber>
    </recommendedName>
</protein>
<gene>
    <name evidence="1" type="primary">aroE</name>
    <name type="ordered locus">USA300HOU_1597</name>
</gene>
<keyword id="KW-0028">Amino-acid biosynthesis</keyword>
<keyword id="KW-0057">Aromatic amino acid biosynthesis</keyword>
<keyword id="KW-0521">NADP</keyword>
<keyword id="KW-0560">Oxidoreductase</keyword>
<sequence>MKFAVIGNPISHSLSPVMHRANFNSLGLDDTYEALNIPIEDFHLIKEIISKKELEGFNITIPHKERIIPYLDYVDEQAINAGAVNTVLIKDGKWIGYNTDGIGYVKGLHSVYPDLENAYILILGAGGASKGIAYELAKFVKPKLTVANRTMARFESWNLNINQISLADAEKYLAEFDIVINTTPAGMAGNNESIINLKHLSPNTLMSDIVYIPYKTPILEEAERKGNHIYNGLDMFVYQGAESFKIWTNKDADINSMKTAVLQQLKGE</sequence>
<reference key="1">
    <citation type="journal article" date="2007" name="BMC Microbiol.">
        <title>Subtle genetic changes enhance virulence of methicillin resistant and sensitive Staphylococcus aureus.</title>
        <authorList>
            <person name="Highlander S.K."/>
            <person name="Hulten K.G."/>
            <person name="Qin X."/>
            <person name="Jiang H."/>
            <person name="Yerrapragada S."/>
            <person name="Mason E.O. Jr."/>
            <person name="Shang Y."/>
            <person name="Williams T.M."/>
            <person name="Fortunov R.M."/>
            <person name="Liu Y."/>
            <person name="Igboeli O."/>
            <person name="Petrosino J."/>
            <person name="Tirumalai M."/>
            <person name="Uzman A."/>
            <person name="Fox G.E."/>
            <person name="Cardenas A.M."/>
            <person name="Muzny D.M."/>
            <person name="Hemphill L."/>
            <person name="Ding Y."/>
            <person name="Dugan S."/>
            <person name="Blyth P.R."/>
            <person name="Buhay C.J."/>
            <person name="Dinh H.H."/>
            <person name="Hawes A.C."/>
            <person name="Holder M."/>
            <person name="Kovar C.L."/>
            <person name="Lee S.L."/>
            <person name="Liu W."/>
            <person name="Nazareth L.V."/>
            <person name="Wang Q."/>
            <person name="Zhou J."/>
            <person name="Kaplan S.L."/>
            <person name="Weinstock G.M."/>
        </authorList>
    </citation>
    <scope>NUCLEOTIDE SEQUENCE [LARGE SCALE GENOMIC DNA]</scope>
    <source>
        <strain>USA300 / TCH1516</strain>
    </source>
</reference>
<evidence type="ECO:0000255" key="1">
    <source>
        <dbReference type="HAMAP-Rule" id="MF_00222"/>
    </source>
</evidence>
<proteinExistence type="inferred from homology"/>